<keyword id="KW-0240">DNA-directed RNA polymerase</keyword>
<keyword id="KW-0244">Early protein</keyword>
<keyword id="KW-0548">Nucleotidyltransferase</keyword>
<keyword id="KW-1185">Reference proteome</keyword>
<keyword id="KW-0804">Transcription</keyword>
<keyword id="KW-0808">Transferase</keyword>
<keyword id="KW-0946">Virion</keyword>
<proteinExistence type="evidence at transcript level"/>
<sequence>MVFQVVCSTCGKDISHERYKLIIRKKSLKDVLVSVKNKCCRLKLSTQIEPQRNLTVQPLLDIN</sequence>
<accession>P0DSU7</accession>
<accession>Q07047</accession>
<accession>Q9QNJ3</accession>
<reference key="1">
    <citation type="journal article" date="1993" name="Nature">
        <title>Potential virulence determinants in terminal regions of variola smallpox virus genome.</title>
        <authorList>
            <person name="Massung R.F."/>
            <person name="Esposito J.J."/>
            <person name="Liu L.I."/>
            <person name="Qi J."/>
            <person name="Utterback T.R."/>
            <person name="Knight J.C."/>
            <person name="Aubin L."/>
            <person name="Yuran T.E."/>
            <person name="Parsons J.M."/>
            <person name="Loparev V.N."/>
            <person name="Selivanov N.A."/>
            <person name="Cavallaro K.F."/>
            <person name="Kerlavage A.R."/>
            <person name="Mahy B.W.J."/>
            <person name="Venter J.C."/>
        </authorList>
    </citation>
    <scope>NUCLEOTIDE SEQUENCE [GENOMIC DNA]</scope>
</reference>
<reference key="2">
    <citation type="journal article" date="1993" name="FEBS Lett.">
        <title>Genes of variola and vaccinia viruses necessary to overcome the host protective mechanisms.</title>
        <authorList>
            <person name="Shchelkunov S.N."/>
            <person name="Blinov V.M."/>
            <person name="Sandakhchiev L.S."/>
        </authorList>
    </citation>
    <scope>NUCLEOTIDE SEQUENCE [LARGE SCALE GENOMIC DNA]</scope>
</reference>
<organismHost>
    <name type="scientific">Homo sapiens</name>
    <name type="common">Human</name>
    <dbReference type="NCBI Taxonomy" id="9606"/>
</organismHost>
<evidence type="ECO:0000250" key="1">
    <source>
        <dbReference type="UniProtKB" id="P68317"/>
    </source>
</evidence>
<evidence type="ECO:0000305" key="2"/>
<feature type="chain" id="PRO_0000099159" description="DNA-directed RNA polymerase 7 kDa subunit">
    <location>
        <begin position="1"/>
        <end position="63"/>
    </location>
</feature>
<name>RP07_VAR67</name>
<gene>
    <name type="primary">OPG090</name>
    <name type="synonym">RPO7</name>
    <name type="ORF">H5_5R</name>
    <name type="ORF">I6R</name>
</gene>
<protein>
    <recommendedName>
        <fullName>DNA-directed RNA polymerase 7 kDa subunit</fullName>
        <ecNumber>2.7.7.6</ecNumber>
    </recommendedName>
</protein>
<dbReference type="EC" id="2.7.7.6"/>
<dbReference type="EMBL" id="X76267">
    <property type="protein sequence ID" value="CAA53873.1"/>
    <property type="molecule type" value="Genomic_DNA"/>
</dbReference>
<dbReference type="EMBL" id="X69198">
    <property type="protein sequence ID" value="CAA49009.1"/>
    <property type="molecule type" value="Genomic_DNA"/>
</dbReference>
<dbReference type="PIR" id="B72159">
    <property type="entry name" value="B72159"/>
</dbReference>
<dbReference type="RefSeq" id="NP_042112.1">
    <property type="nucleotide sequence ID" value="NC_001611.1"/>
</dbReference>
<dbReference type="SMR" id="P0DSU7"/>
<dbReference type="GeneID" id="1486434"/>
<dbReference type="KEGG" id="vg:1486434"/>
<dbReference type="Proteomes" id="UP000002060">
    <property type="component" value="Segment"/>
</dbReference>
<dbReference type="GO" id="GO:0000428">
    <property type="term" value="C:DNA-directed RNA polymerase complex"/>
    <property type="evidence" value="ECO:0007669"/>
    <property type="project" value="UniProtKB-KW"/>
</dbReference>
<dbReference type="GO" id="GO:0044423">
    <property type="term" value="C:virion component"/>
    <property type="evidence" value="ECO:0007669"/>
    <property type="project" value="UniProtKB-KW"/>
</dbReference>
<dbReference type="GO" id="GO:0003677">
    <property type="term" value="F:DNA binding"/>
    <property type="evidence" value="ECO:0007669"/>
    <property type="project" value="InterPro"/>
</dbReference>
<dbReference type="GO" id="GO:0003899">
    <property type="term" value="F:DNA-directed RNA polymerase activity"/>
    <property type="evidence" value="ECO:0007669"/>
    <property type="project" value="UniProtKB-EC"/>
</dbReference>
<dbReference type="GO" id="GO:0006351">
    <property type="term" value="P:DNA-templated transcription"/>
    <property type="evidence" value="ECO:0007669"/>
    <property type="project" value="InterPro"/>
</dbReference>
<dbReference type="InterPro" id="IPR008448">
    <property type="entry name" value="RNA_pol_7kDa_chordopoxvir"/>
</dbReference>
<dbReference type="Pfam" id="PF05864">
    <property type="entry name" value="Chordopox_RPO7"/>
    <property type="match status" value="1"/>
</dbReference>
<organism>
    <name type="scientific">Variola virus (isolate Human/India/Ind3/1967)</name>
    <name type="common">VARV</name>
    <name type="synonym">Smallpox virus</name>
    <dbReference type="NCBI Taxonomy" id="587200"/>
    <lineage>
        <taxon>Viruses</taxon>
        <taxon>Varidnaviria</taxon>
        <taxon>Bamfordvirae</taxon>
        <taxon>Nucleocytoviricota</taxon>
        <taxon>Pokkesviricetes</taxon>
        <taxon>Chitovirales</taxon>
        <taxon>Poxviridae</taxon>
        <taxon>Chordopoxvirinae</taxon>
        <taxon>Orthopoxvirus</taxon>
        <taxon>Variola virus</taxon>
    </lineage>
</organism>
<comment type="function">
    <text evidence="1">Part of the DNA-dependent RNA polymerase which catalyzes the transcription of viral DNA into RNA using the four ribonucleoside triphosphates as substrates. Responsible for the transcription of early, intermediate and late genes. DNA-dependent RNA polymerase associates with the early transcription factor (ETF), itself composed of OPG118 and OPG134, thereby allowing the early genes transcription. Late transcription, and probably also intermediate transcription, require newly synthesized RNA polymerase.</text>
</comment>
<comment type="catalytic activity">
    <reaction>
        <text>RNA(n) + a ribonucleoside 5'-triphosphate = RNA(n+1) + diphosphate</text>
        <dbReference type="Rhea" id="RHEA:21248"/>
        <dbReference type="Rhea" id="RHEA-COMP:14527"/>
        <dbReference type="Rhea" id="RHEA-COMP:17342"/>
        <dbReference type="ChEBI" id="CHEBI:33019"/>
        <dbReference type="ChEBI" id="CHEBI:61557"/>
        <dbReference type="ChEBI" id="CHEBI:140395"/>
        <dbReference type="EC" id="2.7.7.6"/>
    </reaction>
</comment>
<comment type="subunit">
    <text evidence="1">The DNA-dependent RNA polymerase (vRNAP) consists of eight subunits encoded by early viral genes and termed according to their apparent molecular masses Rpo147, Rpo132, Rpo35, Rpo30, Rpo22, Rpo19, Rpo18, and Rpo7. The same holoenzyme, with the addition of the transcription-specificity factor RAP94, is used for early gene expression.</text>
</comment>
<comment type="subcellular location">
    <subcellularLocation>
        <location evidence="1">Virion</location>
    </subcellularLocation>
    <text evidence="1">All the enzymes and other proteins required to synthesize early mRNAs are packaged within the virion core along with the DNA genome. This is necessary because viral early mRNAs are synthesized within minutes after virus entry into the cell and are extruded through pores in the core particle.</text>
</comment>
<comment type="induction">
    <text>Expressed in the early phase of the viral replicative cycle.</text>
</comment>
<comment type="similarity">
    <text evidence="2">Belongs to the poxviridae DNA-directed RNA polymerase 7 kDa subunit family.</text>
</comment>